<sequence>MNILLTNDDGIEAEGINTLAELLSKYHNVTMVAPENQRSASSHSITIYEPIIVKQVKKPYNVEAYSISGTPADCVRVALDKLVPDNIDMVISGINKGLNIGNDILYSGTVSAAIEGSMYKVPSMAVSAQFIKNKKENYKIAAKYALDMLNRLKKEDLKNDVVLNLNIPFCSEEEIKGIKVCKVGNKIFNTRFSEEIDEEGNKILKLEGDINEDIYDGTDVYYIRNKYVTLTPLHYDLTNFNILEETEQLFLS</sequence>
<proteinExistence type="inferred from homology"/>
<keyword id="KW-0963">Cytoplasm</keyword>
<keyword id="KW-0378">Hydrolase</keyword>
<keyword id="KW-0479">Metal-binding</keyword>
<keyword id="KW-0547">Nucleotide-binding</keyword>
<reference key="1">
    <citation type="submission" date="2008-05" db="EMBL/GenBank/DDBJ databases">
        <title>Genome sequence of Clostridium botulinum Ba4 strain 657.</title>
        <authorList>
            <person name="Shrivastava S."/>
            <person name="Brown J.L."/>
            <person name="Bruce D."/>
            <person name="Detter C."/>
            <person name="Munk C."/>
            <person name="Smith L.A."/>
            <person name="Smith T.J."/>
            <person name="Sutton G."/>
            <person name="Brettin T.S."/>
        </authorList>
    </citation>
    <scope>NUCLEOTIDE SEQUENCE [LARGE SCALE GENOMIC DNA]</scope>
    <source>
        <strain>657 / Type Ba4</strain>
    </source>
</reference>
<dbReference type="EC" id="3.1.3.5" evidence="1"/>
<dbReference type="EMBL" id="CP001083">
    <property type="protein sequence ID" value="ACQ53869.1"/>
    <property type="molecule type" value="Genomic_DNA"/>
</dbReference>
<dbReference type="RefSeq" id="WP_003360470.1">
    <property type="nucleotide sequence ID" value="NC_012658.1"/>
</dbReference>
<dbReference type="SMR" id="C3KZ52"/>
<dbReference type="KEGG" id="cbi:CLJ_B0281"/>
<dbReference type="HOGENOM" id="CLU_045192_1_3_9"/>
<dbReference type="Proteomes" id="UP000002333">
    <property type="component" value="Chromosome"/>
</dbReference>
<dbReference type="GO" id="GO:0005737">
    <property type="term" value="C:cytoplasm"/>
    <property type="evidence" value="ECO:0007669"/>
    <property type="project" value="UniProtKB-SubCell"/>
</dbReference>
<dbReference type="GO" id="GO:0008254">
    <property type="term" value="F:3'-nucleotidase activity"/>
    <property type="evidence" value="ECO:0007669"/>
    <property type="project" value="TreeGrafter"/>
</dbReference>
<dbReference type="GO" id="GO:0008253">
    <property type="term" value="F:5'-nucleotidase activity"/>
    <property type="evidence" value="ECO:0007669"/>
    <property type="project" value="UniProtKB-UniRule"/>
</dbReference>
<dbReference type="GO" id="GO:0004309">
    <property type="term" value="F:exopolyphosphatase activity"/>
    <property type="evidence" value="ECO:0007669"/>
    <property type="project" value="TreeGrafter"/>
</dbReference>
<dbReference type="GO" id="GO:0046872">
    <property type="term" value="F:metal ion binding"/>
    <property type="evidence" value="ECO:0007669"/>
    <property type="project" value="UniProtKB-UniRule"/>
</dbReference>
<dbReference type="GO" id="GO:0000166">
    <property type="term" value="F:nucleotide binding"/>
    <property type="evidence" value="ECO:0007669"/>
    <property type="project" value="UniProtKB-KW"/>
</dbReference>
<dbReference type="FunFam" id="3.40.1210.10:FF:000001">
    <property type="entry name" value="5'/3'-nucleotidase SurE"/>
    <property type="match status" value="1"/>
</dbReference>
<dbReference type="Gene3D" id="3.40.1210.10">
    <property type="entry name" value="Survival protein SurE-like phosphatase/nucleotidase"/>
    <property type="match status" value="1"/>
</dbReference>
<dbReference type="HAMAP" id="MF_00060">
    <property type="entry name" value="SurE"/>
    <property type="match status" value="1"/>
</dbReference>
<dbReference type="InterPro" id="IPR030048">
    <property type="entry name" value="SurE"/>
</dbReference>
<dbReference type="InterPro" id="IPR002828">
    <property type="entry name" value="SurE-like_Pase/nucleotidase"/>
</dbReference>
<dbReference type="InterPro" id="IPR036523">
    <property type="entry name" value="SurE-like_sf"/>
</dbReference>
<dbReference type="NCBIfam" id="NF001490">
    <property type="entry name" value="PRK00346.1-4"/>
    <property type="match status" value="1"/>
</dbReference>
<dbReference type="NCBIfam" id="NF010543">
    <property type="entry name" value="PRK13933.1"/>
    <property type="match status" value="1"/>
</dbReference>
<dbReference type="NCBIfam" id="TIGR00087">
    <property type="entry name" value="surE"/>
    <property type="match status" value="1"/>
</dbReference>
<dbReference type="PANTHER" id="PTHR30457">
    <property type="entry name" value="5'-NUCLEOTIDASE SURE"/>
    <property type="match status" value="1"/>
</dbReference>
<dbReference type="PANTHER" id="PTHR30457:SF12">
    <property type="entry name" value="5'_3'-NUCLEOTIDASE SURE"/>
    <property type="match status" value="1"/>
</dbReference>
<dbReference type="Pfam" id="PF01975">
    <property type="entry name" value="SurE"/>
    <property type="match status" value="1"/>
</dbReference>
<dbReference type="SUPFAM" id="SSF64167">
    <property type="entry name" value="SurE-like"/>
    <property type="match status" value="1"/>
</dbReference>
<organism>
    <name type="scientific">Clostridium botulinum (strain 657 / Type Ba4)</name>
    <dbReference type="NCBI Taxonomy" id="515621"/>
    <lineage>
        <taxon>Bacteria</taxon>
        <taxon>Bacillati</taxon>
        <taxon>Bacillota</taxon>
        <taxon>Clostridia</taxon>
        <taxon>Eubacteriales</taxon>
        <taxon>Clostridiaceae</taxon>
        <taxon>Clostridium</taxon>
    </lineage>
</organism>
<name>SURE_CLOB6</name>
<protein>
    <recommendedName>
        <fullName evidence="1">5'-nucleotidase SurE</fullName>
        <ecNumber evidence="1">3.1.3.5</ecNumber>
    </recommendedName>
    <alternativeName>
        <fullName evidence="1">Nucleoside 5'-monophosphate phosphohydrolase</fullName>
    </alternativeName>
</protein>
<comment type="function">
    <text evidence="1">Nucleotidase that shows phosphatase activity on nucleoside 5'-monophosphates.</text>
</comment>
<comment type="catalytic activity">
    <reaction evidence="1">
        <text>a ribonucleoside 5'-phosphate + H2O = a ribonucleoside + phosphate</text>
        <dbReference type="Rhea" id="RHEA:12484"/>
        <dbReference type="ChEBI" id="CHEBI:15377"/>
        <dbReference type="ChEBI" id="CHEBI:18254"/>
        <dbReference type="ChEBI" id="CHEBI:43474"/>
        <dbReference type="ChEBI" id="CHEBI:58043"/>
        <dbReference type="EC" id="3.1.3.5"/>
    </reaction>
</comment>
<comment type="cofactor">
    <cofactor evidence="1">
        <name>a divalent metal cation</name>
        <dbReference type="ChEBI" id="CHEBI:60240"/>
    </cofactor>
    <text evidence="1">Binds 1 divalent metal cation per subunit.</text>
</comment>
<comment type="subcellular location">
    <subcellularLocation>
        <location evidence="1">Cytoplasm</location>
    </subcellularLocation>
</comment>
<comment type="similarity">
    <text evidence="1">Belongs to the SurE nucleotidase family.</text>
</comment>
<evidence type="ECO:0000255" key="1">
    <source>
        <dbReference type="HAMAP-Rule" id="MF_00060"/>
    </source>
</evidence>
<accession>C3KZ52</accession>
<feature type="chain" id="PRO_1000202363" description="5'-nucleotidase SurE">
    <location>
        <begin position="1"/>
        <end position="252"/>
    </location>
</feature>
<feature type="binding site" evidence="1">
    <location>
        <position position="8"/>
    </location>
    <ligand>
        <name>a divalent metal cation</name>
        <dbReference type="ChEBI" id="CHEBI:60240"/>
    </ligand>
</feature>
<feature type="binding site" evidence="1">
    <location>
        <position position="9"/>
    </location>
    <ligand>
        <name>a divalent metal cation</name>
        <dbReference type="ChEBI" id="CHEBI:60240"/>
    </ligand>
</feature>
<feature type="binding site" evidence="1">
    <location>
        <position position="39"/>
    </location>
    <ligand>
        <name>a divalent metal cation</name>
        <dbReference type="ChEBI" id="CHEBI:60240"/>
    </ligand>
</feature>
<feature type="binding site" evidence="1">
    <location>
        <position position="95"/>
    </location>
    <ligand>
        <name>a divalent metal cation</name>
        <dbReference type="ChEBI" id="CHEBI:60240"/>
    </ligand>
</feature>
<gene>
    <name evidence="1" type="primary">surE</name>
    <name type="ordered locus">CLJ_B0281</name>
</gene>